<keyword id="KW-0156">Chromatin regulator</keyword>
<keyword id="KW-0158">Chromosome</keyword>
<keyword id="KW-1017">Isopeptide bond</keyword>
<keyword id="KW-0479">Metal-binding</keyword>
<keyword id="KW-0489">Methyltransferase</keyword>
<keyword id="KW-0517">Myogenesis</keyword>
<keyword id="KW-0539">Nucleus</keyword>
<keyword id="KW-1185">Reference proteome</keyword>
<keyword id="KW-0678">Repressor</keyword>
<keyword id="KW-0949">S-adenosyl-L-methionine</keyword>
<keyword id="KW-0804">Transcription</keyword>
<keyword id="KW-0805">Transcription regulation</keyword>
<keyword id="KW-0808">Transferase</keyword>
<keyword id="KW-0832">Ubl conjugation</keyword>
<keyword id="KW-0862">Zinc</keyword>
<comment type="function">
    <text evidence="2 3">Histone methyltransferase that specifically methylates monomethylated 'Lys-20' (H4K20me1) and dimethylated 'Lys-20' (H4K20me2) of histone H4 to produce respectively dimethylated 'Lys-20' (H4K20me2) and trimethylated 'Lys-20' (H4K20me3) and thus regulates transcription and maintenance of genome integrity. In vitro also methylates unmodified 'Lys-20' (H4K20me0) of histone H4 and nucleosomes (By similarity). H4 'Lys-20' trimethylation represents a specific tag for epigenetic transcriptional repression. Mainly functions in pericentric heterochromatin regions, thereby playing a central role in the establishment of constitutive heterochromatin in these regions. KMT5B is targeted to histone H3 via its interaction with RB1 family proteins (RB1, RBL1 and RBL2) (By similarity). Plays a role in myogenesis by regulating the expression of target genes, such as EID3. Facilitates TP53BP1 foci formation upon DNA damage and proficient non-homologous end-joining (NHEJ)-directed DNA repair by catalyzing the di- and trimethylation of 'Lys-20' of histone H4 (By similarity). May play a role in class switch reconbination by catalyzing the di- and trimethylation of 'Lys-20' of histone H4 (By similarity).</text>
</comment>
<comment type="catalytic activity">
    <reaction evidence="3">
        <text>N(6)-methyl-L-lysyl(20)-[histone H4] + S-adenosyl-L-methionine = N(6),N(6)-dimethyl-L-lysyl(20)-[histone H4] + S-adenosyl-L-homocysteine + H(+)</text>
        <dbReference type="Rhea" id="RHEA:60348"/>
        <dbReference type="Rhea" id="RHEA-COMP:15555"/>
        <dbReference type="Rhea" id="RHEA-COMP:15556"/>
        <dbReference type="ChEBI" id="CHEBI:15378"/>
        <dbReference type="ChEBI" id="CHEBI:57856"/>
        <dbReference type="ChEBI" id="CHEBI:59789"/>
        <dbReference type="ChEBI" id="CHEBI:61929"/>
        <dbReference type="ChEBI" id="CHEBI:61976"/>
        <dbReference type="EC" id="2.1.1.362"/>
    </reaction>
    <physiologicalReaction direction="left-to-right" evidence="3">
        <dbReference type="Rhea" id="RHEA:60349"/>
    </physiologicalReaction>
</comment>
<comment type="catalytic activity">
    <reaction evidence="3">
        <text>N(6),N(6)-dimethyl-L-lysyl(20)-[histone H4] + S-adenosyl-L-methionine = N(6),N(6),N(6)-trimethyl-L-lysyl(20)-[histone H4] + S-adenosyl-L-homocysteine + H(+)</text>
        <dbReference type="Rhea" id="RHEA:61992"/>
        <dbReference type="Rhea" id="RHEA-COMP:15556"/>
        <dbReference type="Rhea" id="RHEA-COMP:15998"/>
        <dbReference type="ChEBI" id="CHEBI:15378"/>
        <dbReference type="ChEBI" id="CHEBI:57856"/>
        <dbReference type="ChEBI" id="CHEBI:59789"/>
        <dbReference type="ChEBI" id="CHEBI:61961"/>
        <dbReference type="ChEBI" id="CHEBI:61976"/>
    </reaction>
    <physiologicalReaction direction="left-to-right" evidence="3">
        <dbReference type="Rhea" id="RHEA:61993"/>
    </physiologicalReaction>
</comment>
<comment type="catalytic activity">
    <reaction evidence="3">
        <text>L-lysyl(20)-[histone H4] + S-adenosyl-L-methionine = N(6)-methyl-L-lysyl(20)-[histone H4] + S-adenosyl-L-homocysteine + H(+)</text>
        <dbReference type="Rhea" id="RHEA:60344"/>
        <dbReference type="Rhea" id="RHEA-COMP:15554"/>
        <dbReference type="Rhea" id="RHEA-COMP:15555"/>
        <dbReference type="ChEBI" id="CHEBI:15378"/>
        <dbReference type="ChEBI" id="CHEBI:29969"/>
        <dbReference type="ChEBI" id="CHEBI:57856"/>
        <dbReference type="ChEBI" id="CHEBI:59789"/>
        <dbReference type="ChEBI" id="CHEBI:61929"/>
        <dbReference type="EC" id="2.1.1.361"/>
    </reaction>
    <physiologicalReaction direction="left-to-right" evidence="3">
        <dbReference type="Rhea" id="RHEA:60345"/>
    </physiologicalReaction>
</comment>
<comment type="subcellular location">
    <subcellularLocation>
        <location>Nucleus</location>
    </subcellularLocation>
    <subcellularLocation>
        <location evidence="1">Chromosome</location>
    </subcellularLocation>
    <text evidence="1">Associated with pericentric heterochromatin.</text>
</comment>
<comment type="similarity">
    <text evidence="5">Belongs to the class V-like SAM-binding methyltransferase superfamily. Histone-lysine methyltransferase family. Suvar4-20 subfamily.</text>
</comment>
<gene>
    <name evidence="3" type="primary">kmt5b-b</name>
    <name type="synonym">suv420h1-b</name>
</gene>
<sequence length="785" mass="89547">MSAKELCENDDLATSLVLDPYLGFQTHKMNTRFRPIKGRQEELKEVIENFKKNEQLEKTFKNLVAGDWARHYFLHKNKMQETHFKAHVFIYLRMFATSSGFEILPCCRYSSERNGAKIVATKDWKRNDKIELLVGCIAELSEAEENMLLRHGENDFSVMYSTRKNCAQLWLGPAAFINHDCRPNCKFVSTGRDTACVKALRDIEPGEEISCYYGDGFFGENNEFCECYTCERRATGAFKSRVGLNEPGPVINSKYGLRETDKRLNRLKKLGDNGKNSDSQSVSSNTDADTSQEKNTANRKSNGLRKKSKSRTLRRQSMSRIPISSSSTSSKLPHINNSRVPKRLRKTAKPLHSKLKIRCHRKKVEQKKTSKKLDVSNLVLKEPKVVLYKNLAIKKDRESQGAVQVTETTGCLTRHAAREYKLNSFKGAYAHGDTSPCTYITRSSLRTRFNSKDMSEAKLQPNSVDGYRSSHGTVIQLDTGDPLFQSTRKNELLQETSRQSMRFQRNNFNTSRRNSRQNRYITQASKVEDSVSIYNSSSIDNSLPDLGNSHCDLGEGNALIHTSPDYKNIKSSTDEYPLVTSEITKSKKNIRTVKNKKRRRITRYDAQLILENSTGIPKLTLRRRHDSNSSKTNEKENEGMGSSKISIKLSKDHEKDKNSLYVAKLNNGFNSGSGSTSTKLKIQLKRDEENRMAFPNENGMYCSDTLSLLGTRMEVDGYDHYEEESVGESSTEEEEEEEDEFDDEFEDDFIPLPPAKRLRLIVGKDSIDIDISSRRREDQSLRLNA</sequence>
<accession>Q5RJX8</accession>
<reference key="1">
    <citation type="submission" date="2004-11" db="EMBL/GenBank/DDBJ databases">
        <authorList>
            <consortium name="NIH - Xenopus Gene Collection (XGC) project"/>
        </authorList>
    </citation>
    <scope>NUCLEOTIDE SEQUENCE [LARGE SCALE MRNA]</scope>
    <source>
        <tissue>Embryo</tissue>
    </source>
</reference>
<dbReference type="EC" id="2.1.1.362" evidence="3"/>
<dbReference type="EC" id="2.1.1.361" evidence="3"/>
<dbReference type="EMBL" id="BC086459">
    <property type="protein sequence ID" value="AAH86459.1"/>
    <property type="molecule type" value="mRNA"/>
</dbReference>
<dbReference type="RefSeq" id="NP_001088653.1">
    <property type="nucleotide sequence ID" value="NM_001095184.1"/>
</dbReference>
<dbReference type="SMR" id="Q5RJX8"/>
<dbReference type="DNASU" id="495826"/>
<dbReference type="GeneID" id="495826"/>
<dbReference type="KEGG" id="xla:495826"/>
<dbReference type="AGR" id="Xenbase:XB-GENE-6253211"/>
<dbReference type="CTD" id="495826"/>
<dbReference type="Xenbase" id="XB-GENE-6253211">
    <property type="gene designation" value="kmt5b.L"/>
</dbReference>
<dbReference type="OrthoDB" id="6627536at2759"/>
<dbReference type="Proteomes" id="UP000186698">
    <property type="component" value="Chromosome 4L"/>
</dbReference>
<dbReference type="Bgee" id="495826">
    <property type="expression patterns" value="Expressed in lung and 19 other cell types or tissues"/>
</dbReference>
<dbReference type="GO" id="GO:0005694">
    <property type="term" value="C:chromosome"/>
    <property type="evidence" value="ECO:0007669"/>
    <property type="project" value="UniProtKB-SubCell"/>
</dbReference>
<dbReference type="GO" id="GO:0005634">
    <property type="term" value="C:nucleus"/>
    <property type="evidence" value="ECO:0000318"/>
    <property type="project" value="GO_Central"/>
</dbReference>
<dbReference type="GO" id="GO:0003682">
    <property type="term" value="F:chromatin binding"/>
    <property type="evidence" value="ECO:0000250"/>
    <property type="project" value="UniProtKB"/>
</dbReference>
<dbReference type="GO" id="GO:0042799">
    <property type="term" value="F:histone H4K20 methyltransferase activity"/>
    <property type="evidence" value="ECO:0000250"/>
    <property type="project" value="UniProtKB"/>
</dbReference>
<dbReference type="GO" id="GO:0140944">
    <property type="term" value="F:histone H4K20 monomethyltransferase activity"/>
    <property type="evidence" value="ECO:0007669"/>
    <property type="project" value="UniProtKB-EC"/>
</dbReference>
<dbReference type="GO" id="GO:0140941">
    <property type="term" value="F:histone H4K20me methyltransferase activity"/>
    <property type="evidence" value="ECO:0007669"/>
    <property type="project" value="UniProtKB-EC"/>
</dbReference>
<dbReference type="GO" id="GO:0046872">
    <property type="term" value="F:metal ion binding"/>
    <property type="evidence" value="ECO:0007669"/>
    <property type="project" value="UniProtKB-KW"/>
</dbReference>
<dbReference type="GO" id="GO:1904047">
    <property type="term" value="F:S-adenosyl-L-methionine binding"/>
    <property type="evidence" value="ECO:0000250"/>
    <property type="project" value="UniProtKB"/>
</dbReference>
<dbReference type="GO" id="GO:0006281">
    <property type="term" value="P:DNA repair"/>
    <property type="evidence" value="ECO:0000250"/>
    <property type="project" value="UniProtKB"/>
</dbReference>
<dbReference type="GO" id="GO:0032259">
    <property type="term" value="P:methylation"/>
    <property type="evidence" value="ECO:0007669"/>
    <property type="project" value="UniProtKB-KW"/>
</dbReference>
<dbReference type="GO" id="GO:0007517">
    <property type="term" value="P:muscle organ development"/>
    <property type="evidence" value="ECO:0007669"/>
    <property type="project" value="UniProtKB-KW"/>
</dbReference>
<dbReference type="GO" id="GO:2001034">
    <property type="term" value="P:positive regulation of double-strand break repair via nonhomologous end joining"/>
    <property type="evidence" value="ECO:0000250"/>
    <property type="project" value="UniProtKB"/>
</dbReference>
<dbReference type="GO" id="GO:0045830">
    <property type="term" value="P:positive regulation of isotype switching"/>
    <property type="evidence" value="ECO:0000250"/>
    <property type="project" value="UniProtKB"/>
</dbReference>
<dbReference type="CDD" id="cd19184">
    <property type="entry name" value="SET_KMT5B"/>
    <property type="match status" value="1"/>
</dbReference>
<dbReference type="FunFam" id="1.10.10.1700:FF:000001">
    <property type="entry name" value="Histone-lysine N-methyltransferase"/>
    <property type="match status" value="1"/>
</dbReference>
<dbReference type="FunFam" id="2.170.270.10:FF:000006">
    <property type="entry name" value="Histone-lysine N-methyltransferase"/>
    <property type="match status" value="1"/>
</dbReference>
<dbReference type="Gene3D" id="1.10.10.1700">
    <property type="entry name" value="Histone-lysine N-methyltransferase"/>
    <property type="match status" value="1"/>
</dbReference>
<dbReference type="Gene3D" id="2.170.270.10">
    <property type="entry name" value="SET domain"/>
    <property type="match status" value="1"/>
</dbReference>
<dbReference type="InterPro" id="IPR041938">
    <property type="entry name" value="Hist-Lys_N-MTase_N"/>
</dbReference>
<dbReference type="InterPro" id="IPR044424">
    <property type="entry name" value="KMT5B_SET"/>
</dbReference>
<dbReference type="InterPro" id="IPR001214">
    <property type="entry name" value="SET_dom"/>
</dbReference>
<dbReference type="InterPro" id="IPR046341">
    <property type="entry name" value="SET_dom_sf"/>
</dbReference>
<dbReference type="InterPro" id="IPR039977">
    <property type="entry name" value="Suv4-20/Set9"/>
</dbReference>
<dbReference type="InterPro" id="IPR025790">
    <property type="entry name" value="Suv4-20_animal"/>
</dbReference>
<dbReference type="PANTHER" id="PTHR12977:SF12">
    <property type="entry name" value="HISTONE-LYSINE N-METHYLTRANSFERASE KMT5B"/>
    <property type="match status" value="1"/>
</dbReference>
<dbReference type="PANTHER" id="PTHR12977">
    <property type="entry name" value="SUPPRESSOR OF VARIEGATION 4-20-RELATED"/>
    <property type="match status" value="1"/>
</dbReference>
<dbReference type="Pfam" id="PF00856">
    <property type="entry name" value="SET"/>
    <property type="match status" value="1"/>
</dbReference>
<dbReference type="SMART" id="SM00317">
    <property type="entry name" value="SET"/>
    <property type="match status" value="1"/>
</dbReference>
<dbReference type="SUPFAM" id="SSF82199">
    <property type="entry name" value="SET domain"/>
    <property type="match status" value="1"/>
</dbReference>
<dbReference type="PROSITE" id="PS51570">
    <property type="entry name" value="SAM_MT43_SUVAR420_2"/>
    <property type="match status" value="1"/>
</dbReference>
<dbReference type="PROSITE" id="PS50280">
    <property type="entry name" value="SET"/>
    <property type="match status" value="1"/>
</dbReference>
<protein>
    <recommendedName>
        <fullName evidence="7">Histone-lysine N-methyltransferase KMT5B-B</fullName>
    </recommendedName>
    <alternativeName>
        <fullName evidence="3">Lysine-specific methyltransferase 5B-B</fullName>
    </alternativeName>
    <alternativeName>
        <fullName>Suppressor of variegation 4-20 homolog 1-B</fullName>
        <shortName>Su(var)4-20 homolog 1-B</shortName>
        <shortName>Suv4-20h1-B</shortName>
    </alternativeName>
    <alternativeName>
        <fullName evidence="7">[histone H4]-N-methyl-L-lysine20 N-methyltransferase KMT5B</fullName>
        <ecNumber evidence="3">2.1.1.362</ecNumber>
    </alternativeName>
    <alternativeName>
        <fullName evidence="7">[histone H4]-lysine20 N-methyltransferase KMT5B</fullName>
        <ecNumber evidence="3">2.1.1.361</ecNumber>
    </alternativeName>
</protein>
<organism>
    <name type="scientific">Xenopus laevis</name>
    <name type="common">African clawed frog</name>
    <dbReference type="NCBI Taxonomy" id="8355"/>
    <lineage>
        <taxon>Eukaryota</taxon>
        <taxon>Metazoa</taxon>
        <taxon>Chordata</taxon>
        <taxon>Craniata</taxon>
        <taxon>Vertebrata</taxon>
        <taxon>Euteleostomi</taxon>
        <taxon>Amphibia</taxon>
        <taxon>Batrachia</taxon>
        <taxon>Anura</taxon>
        <taxon>Pipoidea</taxon>
        <taxon>Pipidae</taxon>
        <taxon>Xenopodinae</taxon>
        <taxon>Xenopus</taxon>
        <taxon>Xenopus</taxon>
    </lineage>
</organism>
<feature type="chain" id="PRO_0000281792" description="Histone-lysine N-methyltransferase KMT5B-B">
    <location>
        <begin position="1"/>
        <end position="785"/>
    </location>
</feature>
<feature type="domain" description="SET" evidence="4">
    <location>
        <begin position="99"/>
        <end position="214"/>
    </location>
</feature>
<feature type="region of interest" description="Disordered" evidence="6">
    <location>
        <begin position="268"/>
        <end position="347"/>
    </location>
</feature>
<feature type="region of interest" description="Disordered" evidence="6">
    <location>
        <begin position="623"/>
        <end position="644"/>
    </location>
</feature>
<feature type="region of interest" description="Disordered" evidence="6">
    <location>
        <begin position="722"/>
        <end position="748"/>
    </location>
</feature>
<feature type="compositionally biased region" description="Polar residues" evidence="6">
    <location>
        <begin position="274"/>
        <end position="301"/>
    </location>
</feature>
<feature type="compositionally biased region" description="Basic residues" evidence="6">
    <location>
        <begin position="302"/>
        <end position="314"/>
    </location>
</feature>
<feature type="compositionally biased region" description="Low complexity" evidence="6">
    <location>
        <begin position="318"/>
        <end position="330"/>
    </location>
</feature>
<feature type="compositionally biased region" description="Basic and acidic residues" evidence="6">
    <location>
        <begin position="626"/>
        <end position="638"/>
    </location>
</feature>
<feature type="binding site" evidence="3">
    <location>
        <position position="27"/>
    </location>
    <ligand>
        <name>S-adenosyl-L-methionine</name>
        <dbReference type="ChEBI" id="CHEBI:59789"/>
    </ligand>
</feature>
<feature type="binding site" evidence="3">
    <location>
        <begin position="109"/>
        <end position="112"/>
    </location>
    <ligand>
        <name>S-adenosyl-L-methionine</name>
        <dbReference type="ChEBI" id="CHEBI:59789"/>
    </ligand>
</feature>
<feature type="binding site" evidence="3">
    <location>
        <position position="116"/>
    </location>
    <ligand>
        <name>S-adenosyl-L-methionine</name>
        <dbReference type="ChEBI" id="CHEBI:59789"/>
    </ligand>
</feature>
<feature type="binding site" evidence="3">
    <location>
        <position position="163"/>
    </location>
    <ligand>
        <name>S-adenosyl-L-methionine</name>
        <dbReference type="ChEBI" id="CHEBI:59789"/>
    </ligand>
</feature>
<feature type="binding site" evidence="3">
    <location>
        <begin position="178"/>
        <end position="179"/>
    </location>
    <ligand>
        <name>S-adenosyl-L-methionine</name>
        <dbReference type="ChEBI" id="CHEBI:59789"/>
    </ligand>
</feature>
<feature type="binding site" evidence="3">
    <location>
        <position position="181"/>
    </location>
    <ligand>
        <name>Zn(2+)</name>
        <dbReference type="ChEBI" id="CHEBI:29105"/>
    </ligand>
</feature>
<feature type="binding site" evidence="3">
    <location>
        <position position="225"/>
    </location>
    <ligand>
        <name>Zn(2+)</name>
        <dbReference type="ChEBI" id="CHEBI:29105"/>
    </ligand>
</feature>
<feature type="binding site" evidence="3">
    <location>
        <position position="226"/>
    </location>
    <ligand>
        <name>S-adenosyl-L-methionine</name>
        <dbReference type="ChEBI" id="CHEBI:59789"/>
    </ligand>
</feature>
<feature type="binding site" evidence="3">
    <location>
        <position position="227"/>
    </location>
    <ligand>
        <name>Zn(2+)</name>
        <dbReference type="ChEBI" id="CHEBI:29105"/>
    </ligand>
</feature>
<feature type="binding site" evidence="3">
    <location>
        <position position="230"/>
    </location>
    <ligand>
        <name>Zn(2+)</name>
        <dbReference type="ChEBI" id="CHEBI:29105"/>
    </ligand>
</feature>
<feature type="cross-link" description="Glycyl lysine isopeptide (Lys-Gly) (interchain with G-Cter in SUMO2)" evidence="3">
    <location>
        <position position="458"/>
    </location>
</feature>
<name>KT5BB_XENLA</name>
<proteinExistence type="evidence at transcript level"/>
<evidence type="ECO:0000250" key="1"/>
<evidence type="ECO:0000250" key="2">
    <source>
        <dbReference type="UniProtKB" id="Q3U8K7"/>
    </source>
</evidence>
<evidence type="ECO:0000250" key="3">
    <source>
        <dbReference type="UniProtKB" id="Q4FZB7"/>
    </source>
</evidence>
<evidence type="ECO:0000255" key="4">
    <source>
        <dbReference type="PROSITE-ProRule" id="PRU00190"/>
    </source>
</evidence>
<evidence type="ECO:0000255" key="5">
    <source>
        <dbReference type="PROSITE-ProRule" id="PRU00903"/>
    </source>
</evidence>
<evidence type="ECO:0000256" key="6">
    <source>
        <dbReference type="SAM" id="MobiDB-lite"/>
    </source>
</evidence>
<evidence type="ECO:0000305" key="7"/>